<proteinExistence type="inferred from homology"/>
<comment type="function">
    <text evidence="1">Involved in urease metallocenter assembly. Binds nickel. Probably functions as a nickel donor during metallocenter assembly.</text>
</comment>
<comment type="subcellular location">
    <subcellularLocation>
        <location evidence="1">Cytoplasm</location>
    </subcellularLocation>
</comment>
<comment type="similarity">
    <text evidence="1">Belongs to the UreE family.</text>
</comment>
<gene>
    <name evidence="1" type="primary">ureE</name>
    <name type="ordered locus">YpAngola_A3557</name>
</gene>
<reference key="1">
    <citation type="journal article" date="2010" name="J. Bacteriol.">
        <title>Genome sequence of the deep-rooted Yersinia pestis strain Angola reveals new insights into the evolution and pangenome of the plague bacterium.</title>
        <authorList>
            <person name="Eppinger M."/>
            <person name="Worsham P.L."/>
            <person name="Nikolich M.P."/>
            <person name="Riley D.R."/>
            <person name="Sebastian Y."/>
            <person name="Mou S."/>
            <person name="Achtman M."/>
            <person name="Lindler L.E."/>
            <person name="Ravel J."/>
        </authorList>
    </citation>
    <scope>NUCLEOTIDE SEQUENCE [LARGE SCALE GENOMIC DNA]</scope>
    <source>
        <strain>Angola</strain>
    </source>
</reference>
<name>UREE_YERPG</name>
<dbReference type="EMBL" id="CP000901">
    <property type="protein sequence ID" value="ABX87521.1"/>
    <property type="molecule type" value="Genomic_DNA"/>
</dbReference>
<dbReference type="RefSeq" id="WP_002212230.1">
    <property type="nucleotide sequence ID" value="NZ_CP009935.1"/>
</dbReference>
<dbReference type="SMR" id="A9R3V1"/>
<dbReference type="GeneID" id="57976026"/>
<dbReference type="KEGG" id="ypg:YpAngola_A3557"/>
<dbReference type="PATRIC" id="fig|349746.12.peg.251"/>
<dbReference type="GO" id="GO:0005737">
    <property type="term" value="C:cytoplasm"/>
    <property type="evidence" value="ECO:0007669"/>
    <property type="project" value="UniProtKB-SubCell"/>
</dbReference>
<dbReference type="GO" id="GO:0016151">
    <property type="term" value="F:nickel cation binding"/>
    <property type="evidence" value="ECO:0007669"/>
    <property type="project" value="UniProtKB-UniRule"/>
</dbReference>
<dbReference type="GO" id="GO:0051082">
    <property type="term" value="F:unfolded protein binding"/>
    <property type="evidence" value="ECO:0007669"/>
    <property type="project" value="UniProtKB-UniRule"/>
</dbReference>
<dbReference type="GO" id="GO:0006457">
    <property type="term" value="P:protein folding"/>
    <property type="evidence" value="ECO:0007669"/>
    <property type="project" value="InterPro"/>
</dbReference>
<dbReference type="CDD" id="cd00571">
    <property type="entry name" value="UreE"/>
    <property type="match status" value="1"/>
</dbReference>
<dbReference type="Gene3D" id="2.60.260.20">
    <property type="entry name" value="Urease metallochaperone UreE, N-terminal domain"/>
    <property type="match status" value="1"/>
</dbReference>
<dbReference type="HAMAP" id="MF_00822">
    <property type="entry name" value="UreE"/>
    <property type="match status" value="1"/>
</dbReference>
<dbReference type="InterPro" id="IPR012406">
    <property type="entry name" value="UreE"/>
</dbReference>
<dbReference type="InterPro" id="IPR004029">
    <property type="entry name" value="UreE_N"/>
</dbReference>
<dbReference type="InterPro" id="IPR036118">
    <property type="entry name" value="UreE_N_sf"/>
</dbReference>
<dbReference type="NCBIfam" id="NF009761">
    <property type="entry name" value="PRK13262.1"/>
    <property type="match status" value="1"/>
</dbReference>
<dbReference type="Pfam" id="PF02814">
    <property type="entry name" value="UreE_N"/>
    <property type="match status" value="1"/>
</dbReference>
<dbReference type="SMART" id="SM00988">
    <property type="entry name" value="UreE_N"/>
    <property type="match status" value="1"/>
</dbReference>
<dbReference type="SUPFAM" id="SSF69287">
    <property type="entry name" value="Urease metallochaperone UreE, N-terminal domain"/>
    <property type="match status" value="1"/>
</dbReference>
<feature type="chain" id="PRO_1000197453" description="Urease accessory protein UreE">
    <location>
        <begin position="1"/>
        <end position="231"/>
    </location>
</feature>
<feature type="region of interest" description="Disordered" evidence="2">
    <location>
        <begin position="185"/>
        <end position="231"/>
    </location>
</feature>
<feature type="compositionally biased region" description="Basic and acidic residues" evidence="2">
    <location>
        <begin position="203"/>
        <end position="231"/>
    </location>
</feature>
<organism>
    <name type="scientific">Yersinia pestis bv. Antiqua (strain Angola)</name>
    <dbReference type="NCBI Taxonomy" id="349746"/>
    <lineage>
        <taxon>Bacteria</taxon>
        <taxon>Pseudomonadati</taxon>
        <taxon>Pseudomonadota</taxon>
        <taxon>Gammaproteobacteria</taxon>
        <taxon>Enterobacterales</taxon>
        <taxon>Yersiniaceae</taxon>
        <taxon>Yersinia</taxon>
    </lineage>
</organism>
<sequence length="231" mass="25948">MILIEHILGNVKKDPVWREKLKDATFDLLILDQREAQKSRCRKSSTQGLDLGISLDRNVVLADGDVLAWDEETNVAVVVQINLRDVMVIDLSELKSRSPDELIKTCFELGHALGNQHWKAVTKHNEVYVPLTVATTMMDSVMRTHGFQHLPFRFVKGAEILPLLTNSEARLLFGGAEDTDTHVHVASPLDEPHGSGLHIHGIHSHEEGHSHGDHDHDHSHSHGDHDHDHKH</sequence>
<keyword id="KW-0143">Chaperone</keyword>
<keyword id="KW-0963">Cytoplasm</keyword>
<keyword id="KW-0533">Nickel</keyword>
<protein>
    <recommendedName>
        <fullName evidence="1">Urease accessory protein UreE</fullName>
    </recommendedName>
</protein>
<evidence type="ECO:0000255" key="1">
    <source>
        <dbReference type="HAMAP-Rule" id="MF_00822"/>
    </source>
</evidence>
<evidence type="ECO:0000256" key="2">
    <source>
        <dbReference type="SAM" id="MobiDB-lite"/>
    </source>
</evidence>
<accession>A9R3V1</accession>